<keyword id="KW-0255">Endonuclease</keyword>
<keyword id="KW-0378">Hydrolase</keyword>
<keyword id="KW-0540">Nuclease</keyword>
<keyword id="KW-1185">Reference proteome</keyword>
<keyword id="KW-0694">RNA-binding</keyword>
<keyword id="KW-0819">tRNA processing</keyword>
<name>RNPA_SYNS9</name>
<dbReference type="EC" id="3.1.26.5" evidence="1"/>
<dbReference type="EMBL" id="CP000097">
    <property type="protein sequence ID" value="ABB26742.1"/>
    <property type="molecule type" value="Genomic_DNA"/>
</dbReference>
<dbReference type="RefSeq" id="WP_011360549.1">
    <property type="nucleotide sequence ID" value="NC_007513.1"/>
</dbReference>
<dbReference type="SMR" id="Q3AV41"/>
<dbReference type="STRING" id="316279.Syncc9902_1785"/>
<dbReference type="KEGG" id="sye:Syncc9902_1785"/>
<dbReference type="eggNOG" id="COG0594">
    <property type="taxonomic scope" value="Bacteria"/>
</dbReference>
<dbReference type="HOGENOM" id="CLU_117179_2_0_3"/>
<dbReference type="OrthoDB" id="540358at2"/>
<dbReference type="Proteomes" id="UP000002712">
    <property type="component" value="Chromosome"/>
</dbReference>
<dbReference type="GO" id="GO:0030677">
    <property type="term" value="C:ribonuclease P complex"/>
    <property type="evidence" value="ECO:0007669"/>
    <property type="project" value="TreeGrafter"/>
</dbReference>
<dbReference type="GO" id="GO:0042781">
    <property type="term" value="F:3'-tRNA processing endoribonuclease activity"/>
    <property type="evidence" value="ECO:0007669"/>
    <property type="project" value="TreeGrafter"/>
</dbReference>
<dbReference type="GO" id="GO:0004526">
    <property type="term" value="F:ribonuclease P activity"/>
    <property type="evidence" value="ECO:0007669"/>
    <property type="project" value="UniProtKB-UniRule"/>
</dbReference>
<dbReference type="GO" id="GO:0000049">
    <property type="term" value="F:tRNA binding"/>
    <property type="evidence" value="ECO:0007669"/>
    <property type="project" value="UniProtKB-UniRule"/>
</dbReference>
<dbReference type="GO" id="GO:0001682">
    <property type="term" value="P:tRNA 5'-leader removal"/>
    <property type="evidence" value="ECO:0007669"/>
    <property type="project" value="UniProtKB-UniRule"/>
</dbReference>
<dbReference type="Gene3D" id="3.30.230.10">
    <property type="match status" value="1"/>
</dbReference>
<dbReference type="HAMAP" id="MF_00227">
    <property type="entry name" value="RNase_P"/>
    <property type="match status" value="1"/>
</dbReference>
<dbReference type="InterPro" id="IPR020568">
    <property type="entry name" value="Ribosomal_Su5_D2-typ_SF"/>
</dbReference>
<dbReference type="InterPro" id="IPR014721">
    <property type="entry name" value="Ribsml_uS5_D2-typ_fold_subgr"/>
</dbReference>
<dbReference type="InterPro" id="IPR000100">
    <property type="entry name" value="RNase_P"/>
</dbReference>
<dbReference type="PANTHER" id="PTHR33992">
    <property type="entry name" value="RIBONUCLEASE P PROTEIN COMPONENT"/>
    <property type="match status" value="1"/>
</dbReference>
<dbReference type="PANTHER" id="PTHR33992:SF1">
    <property type="entry name" value="RIBONUCLEASE P PROTEIN COMPONENT"/>
    <property type="match status" value="1"/>
</dbReference>
<dbReference type="Pfam" id="PF00825">
    <property type="entry name" value="Ribonuclease_P"/>
    <property type="match status" value="1"/>
</dbReference>
<dbReference type="SUPFAM" id="SSF54211">
    <property type="entry name" value="Ribosomal protein S5 domain 2-like"/>
    <property type="match status" value="1"/>
</dbReference>
<organism>
    <name type="scientific">Synechococcus sp. (strain CC9902)</name>
    <dbReference type="NCBI Taxonomy" id="316279"/>
    <lineage>
        <taxon>Bacteria</taxon>
        <taxon>Bacillati</taxon>
        <taxon>Cyanobacteriota</taxon>
        <taxon>Cyanophyceae</taxon>
        <taxon>Synechococcales</taxon>
        <taxon>Synechococcaceae</taxon>
        <taxon>Synechococcus</taxon>
    </lineage>
</organism>
<sequence length="128" mass="15204">MVLPASMRLRGHRCFSRLHRSQRRHHGKWMVLRQIKRDRTLLRSELRSQHDTTCRCALVISNKVSKRAVRRNRLRRLLHNHLRQRLEQRTDLAGTWLLFSLRPDAAEAEPAQLLEECDSLLKIAGLER</sequence>
<evidence type="ECO:0000255" key="1">
    <source>
        <dbReference type="HAMAP-Rule" id="MF_00227"/>
    </source>
</evidence>
<accession>Q3AV41</accession>
<gene>
    <name evidence="1" type="primary">rnpA</name>
    <name type="ordered locus">Syncc9902_1785</name>
</gene>
<reference key="1">
    <citation type="submission" date="2005-08" db="EMBL/GenBank/DDBJ databases">
        <title>Complete sequence of Synechococcus sp. CC9902.</title>
        <authorList>
            <person name="Copeland A."/>
            <person name="Lucas S."/>
            <person name="Lapidus A."/>
            <person name="Barry K."/>
            <person name="Detter J.C."/>
            <person name="Glavina T."/>
            <person name="Hammon N."/>
            <person name="Israni S."/>
            <person name="Pitluck S."/>
            <person name="Martinez M."/>
            <person name="Schmutz J."/>
            <person name="Larimer F."/>
            <person name="Land M."/>
            <person name="Kyrpides N."/>
            <person name="Ivanova N."/>
            <person name="Richardson P."/>
        </authorList>
    </citation>
    <scope>NUCLEOTIDE SEQUENCE [LARGE SCALE GENOMIC DNA]</scope>
    <source>
        <strain>CC9902</strain>
    </source>
</reference>
<proteinExistence type="inferred from homology"/>
<feature type="chain" id="PRO_1000194680" description="Ribonuclease P protein component">
    <location>
        <begin position="1"/>
        <end position="128"/>
    </location>
</feature>
<comment type="function">
    <text evidence="1">RNaseP catalyzes the removal of the 5'-leader sequence from pre-tRNA to produce the mature 5'-terminus. It can also cleave other RNA substrates such as 4.5S RNA. The protein component plays an auxiliary but essential role in vivo by binding to the 5'-leader sequence and broadening the substrate specificity of the ribozyme.</text>
</comment>
<comment type="catalytic activity">
    <reaction evidence="1">
        <text>Endonucleolytic cleavage of RNA, removing 5'-extranucleotides from tRNA precursor.</text>
        <dbReference type="EC" id="3.1.26.5"/>
    </reaction>
</comment>
<comment type="subunit">
    <text evidence="1">Consists of a catalytic RNA component (M1 or rnpB) and a protein subunit.</text>
</comment>
<comment type="similarity">
    <text evidence="1">Belongs to the RnpA family.</text>
</comment>
<protein>
    <recommendedName>
        <fullName evidence="1">Ribonuclease P protein component</fullName>
        <shortName evidence="1">RNase P protein</shortName>
        <shortName evidence="1">RNaseP protein</shortName>
        <ecNumber evidence="1">3.1.26.5</ecNumber>
    </recommendedName>
    <alternativeName>
        <fullName evidence="1">Protein C5</fullName>
    </alternativeName>
</protein>